<comment type="function">
    <text evidence="1">Key enzyme in the regulation of glycerol uptake and metabolism. Catalyzes the phosphorylation of glycerol to yield sn-glycerol 3-phosphate.</text>
</comment>
<comment type="catalytic activity">
    <reaction evidence="1">
        <text>glycerol + ATP = sn-glycerol 3-phosphate + ADP + H(+)</text>
        <dbReference type="Rhea" id="RHEA:21644"/>
        <dbReference type="ChEBI" id="CHEBI:15378"/>
        <dbReference type="ChEBI" id="CHEBI:17754"/>
        <dbReference type="ChEBI" id="CHEBI:30616"/>
        <dbReference type="ChEBI" id="CHEBI:57597"/>
        <dbReference type="ChEBI" id="CHEBI:456216"/>
        <dbReference type="EC" id="2.7.1.30"/>
    </reaction>
</comment>
<comment type="activity regulation">
    <text evidence="1">Inhibited by fructose 1,6-bisphosphate (FBP).</text>
</comment>
<comment type="pathway">
    <text evidence="1">Polyol metabolism; glycerol degradation via glycerol kinase pathway; sn-glycerol 3-phosphate from glycerol: step 1/1.</text>
</comment>
<comment type="similarity">
    <text evidence="1">Belongs to the FGGY kinase family.</text>
</comment>
<name>GLPK_MYCVP</name>
<reference key="1">
    <citation type="submission" date="2006-12" db="EMBL/GenBank/DDBJ databases">
        <title>Complete sequence of Mycobacterium vanbaalenii PYR-1.</title>
        <authorList>
            <consortium name="US DOE Joint Genome Institute"/>
            <person name="Copeland A."/>
            <person name="Lucas S."/>
            <person name="Lapidus A."/>
            <person name="Barry K."/>
            <person name="Detter J.C."/>
            <person name="Glavina del Rio T."/>
            <person name="Hammon N."/>
            <person name="Israni S."/>
            <person name="Dalin E."/>
            <person name="Tice H."/>
            <person name="Pitluck S."/>
            <person name="Singan V."/>
            <person name="Schmutz J."/>
            <person name="Larimer F."/>
            <person name="Land M."/>
            <person name="Hauser L."/>
            <person name="Kyrpides N."/>
            <person name="Anderson I.J."/>
            <person name="Miller C."/>
            <person name="Richardson P."/>
        </authorList>
    </citation>
    <scope>NUCLEOTIDE SEQUENCE [LARGE SCALE GENOMIC DNA]</scope>
    <source>
        <strain>DSM 7251 / JCM 13017 / BCRC 16820 / KCTC 9966 / NRRL B-24157 / PYR-1</strain>
    </source>
</reference>
<sequence>MADFVAAIDQGTTSTRCMIFDHDGAEVGRHQLEHEQILPRAGWVEHNPVEIWERTGSVLATALNKTKLSTSDLVALGITNQRETSLVWNRHTGRPYYNAIVWQDTRTDRIASALDRDGRGDVIRQKAGLPPATYFSGGKLQWLLENVDGLRADAEKGDALFGTTDTWVLWNLTGGHRGGVHVTDVTNASRTMLMNLETLDWDDELLGFFDIPRQMLPEIRPSSSPEPHGVTVDWGPADGEIPVTGILGDQQAAMVGQVCLDAGEAKNTYGTGNFLLLNTGENIVRSKNGLLTTVCYQFGDAKPVYALEGSIAVTGSAVQWLRDQLGIISGAAQSESLARQVEDNGGVYFVPAFSGLFAPYWRSDARGAIVGLSRFNTNAHVARATLEAICYQSRDVVDAMAADSGVHLEVLKVDGGITANDLCMQIQADVLGVDVVRPVVAETTALGAAYAAGLAVGFWDGADDLRANWQEDKRWSPTWSDDQRAAGYAGWRKAVQRTMDWVDVD</sequence>
<protein>
    <recommendedName>
        <fullName evidence="1">Glycerol kinase</fullName>
        <ecNumber evidence="1">2.7.1.30</ecNumber>
    </recommendedName>
    <alternativeName>
        <fullName evidence="1">ATP:glycerol 3-phosphotransferase</fullName>
    </alternativeName>
    <alternativeName>
        <fullName evidence="1">Glycerokinase</fullName>
        <shortName evidence="1">GK</shortName>
    </alternativeName>
</protein>
<proteinExistence type="inferred from homology"/>
<accession>A1TGD7</accession>
<organism>
    <name type="scientific">Mycolicibacterium vanbaalenii (strain DSM 7251 / JCM 13017 / BCRC 16820 / KCTC 9966 / NRRL B-24157 / PYR-1)</name>
    <name type="common">Mycobacterium vanbaalenii</name>
    <dbReference type="NCBI Taxonomy" id="350058"/>
    <lineage>
        <taxon>Bacteria</taxon>
        <taxon>Bacillati</taxon>
        <taxon>Actinomycetota</taxon>
        <taxon>Actinomycetes</taxon>
        <taxon>Mycobacteriales</taxon>
        <taxon>Mycobacteriaceae</taxon>
        <taxon>Mycolicibacterium</taxon>
    </lineage>
</organism>
<keyword id="KW-0067">ATP-binding</keyword>
<keyword id="KW-0319">Glycerol metabolism</keyword>
<keyword id="KW-0418">Kinase</keyword>
<keyword id="KW-0547">Nucleotide-binding</keyword>
<keyword id="KW-0808">Transferase</keyword>
<feature type="chain" id="PRO_1000020749" description="Glycerol kinase">
    <location>
        <begin position="1"/>
        <end position="505"/>
    </location>
</feature>
<feature type="binding site" evidence="1">
    <location>
        <position position="12"/>
    </location>
    <ligand>
        <name>ADP</name>
        <dbReference type="ChEBI" id="CHEBI:456216"/>
    </ligand>
</feature>
<feature type="binding site" evidence="1">
    <location>
        <position position="12"/>
    </location>
    <ligand>
        <name>ATP</name>
        <dbReference type="ChEBI" id="CHEBI:30616"/>
    </ligand>
</feature>
<feature type="binding site" evidence="1">
    <location>
        <position position="12"/>
    </location>
    <ligand>
        <name>sn-glycerol 3-phosphate</name>
        <dbReference type="ChEBI" id="CHEBI:57597"/>
    </ligand>
</feature>
<feature type="binding site" evidence="1">
    <location>
        <position position="13"/>
    </location>
    <ligand>
        <name>ATP</name>
        <dbReference type="ChEBI" id="CHEBI:30616"/>
    </ligand>
</feature>
<feature type="binding site" evidence="1">
    <location>
        <position position="14"/>
    </location>
    <ligand>
        <name>ATP</name>
        <dbReference type="ChEBI" id="CHEBI:30616"/>
    </ligand>
</feature>
<feature type="binding site" evidence="1">
    <location>
        <position position="16"/>
    </location>
    <ligand>
        <name>ADP</name>
        <dbReference type="ChEBI" id="CHEBI:456216"/>
    </ligand>
</feature>
<feature type="binding site" evidence="1">
    <location>
        <position position="82"/>
    </location>
    <ligand>
        <name>glycerol</name>
        <dbReference type="ChEBI" id="CHEBI:17754"/>
    </ligand>
</feature>
<feature type="binding site" evidence="1">
    <location>
        <position position="82"/>
    </location>
    <ligand>
        <name>sn-glycerol 3-phosphate</name>
        <dbReference type="ChEBI" id="CHEBI:57597"/>
    </ligand>
</feature>
<feature type="binding site" evidence="1">
    <location>
        <position position="83"/>
    </location>
    <ligand>
        <name>glycerol</name>
        <dbReference type="ChEBI" id="CHEBI:17754"/>
    </ligand>
</feature>
<feature type="binding site" evidence="1">
    <location>
        <position position="83"/>
    </location>
    <ligand>
        <name>sn-glycerol 3-phosphate</name>
        <dbReference type="ChEBI" id="CHEBI:57597"/>
    </ligand>
</feature>
<feature type="binding site" evidence="1">
    <location>
        <position position="134"/>
    </location>
    <ligand>
        <name>glycerol</name>
        <dbReference type="ChEBI" id="CHEBI:17754"/>
    </ligand>
</feature>
<feature type="binding site" evidence="1">
    <location>
        <position position="134"/>
    </location>
    <ligand>
        <name>sn-glycerol 3-phosphate</name>
        <dbReference type="ChEBI" id="CHEBI:57597"/>
    </ligand>
</feature>
<feature type="binding site" evidence="1">
    <location>
        <position position="249"/>
    </location>
    <ligand>
        <name>glycerol</name>
        <dbReference type="ChEBI" id="CHEBI:17754"/>
    </ligand>
</feature>
<feature type="binding site" evidence="1">
    <location>
        <position position="249"/>
    </location>
    <ligand>
        <name>sn-glycerol 3-phosphate</name>
        <dbReference type="ChEBI" id="CHEBI:57597"/>
    </ligand>
</feature>
<feature type="binding site" evidence="1">
    <location>
        <position position="250"/>
    </location>
    <ligand>
        <name>glycerol</name>
        <dbReference type="ChEBI" id="CHEBI:17754"/>
    </ligand>
</feature>
<feature type="binding site" evidence="1">
    <location>
        <position position="271"/>
    </location>
    <ligand>
        <name>ADP</name>
        <dbReference type="ChEBI" id="CHEBI:456216"/>
    </ligand>
</feature>
<feature type="binding site" evidence="1">
    <location>
        <position position="271"/>
    </location>
    <ligand>
        <name>ATP</name>
        <dbReference type="ChEBI" id="CHEBI:30616"/>
    </ligand>
</feature>
<feature type="binding site" evidence="1">
    <location>
        <position position="315"/>
    </location>
    <ligand>
        <name>ADP</name>
        <dbReference type="ChEBI" id="CHEBI:456216"/>
    </ligand>
</feature>
<feature type="binding site" evidence="1">
    <location>
        <position position="315"/>
    </location>
    <ligand>
        <name>ATP</name>
        <dbReference type="ChEBI" id="CHEBI:30616"/>
    </ligand>
</feature>
<feature type="binding site" evidence="1">
    <location>
        <position position="319"/>
    </location>
    <ligand>
        <name>ATP</name>
        <dbReference type="ChEBI" id="CHEBI:30616"/>
    </ligand>
</feature>
<feature type="binding site" evidence="1">
    <location>
        <position position="416"/>
    </location>
    <ligand>
        <name>ADP</name>
        <dbReference type="ChEBI" id="CHEBI:456216"/>
    </ligand>
</feature>
<feature type="binding site" evidence="1">
    <location>
        <position position="416"/>
    </location>
    <ligand>
        <name>ATP</name>
        <dbReference type="ChEBI" id="CHEBI:30616"/>
    </ligand>
</feature>
<feature type="binding site" evidence="1">
    <location>
        <position position="420"/>
    </location>
    <ligand>
        <name>ADP</name>
        <dbReference type="ChEBI" id="CHEBI:456216"/>
    </ligand>
</feature>
<evidence type="ECO:0000255" key="1">
    <source>
        <dbReference type="HAMAP-Rule" id="MF_00186"/>
    </source>
</evidence>
<gene>
    <name evidence="1" type="primary">glpK</name>
    <name type="ordered locus">Mvan_5467</name>
</gene>
<dbReference type="EC" id="2.7.1.30" evidence="1"/>
<dbReference type="EMBL" id="CP000511">
    <property type="protein sequence ID" value="ABM16237.1"/>
    <property type="molecule type" value="Genomic_DNA"/>
</dbReference>
<dbReference type="RefSeq" id="WP_011782592.1">
    <property type="nucleotide sequence ID" value="NZ_JACKSD010000035.1"/>
</dbReference>
<dbReference type="SMR" id="A1TGD7"/>
<dbReference type="STRING" id="350058.Mvan_5467"/>
<dbReference type="KEGG" id="mva:Mvan_5467"/>
<dbReference type="eggNOG" id="COG0554">
    <property type="taxonomic scope" value="Bacteria"/>
</dbReference>
<dbReference type="HOGENOM" id="CLU_009281_2_3_11"/>
<dbReference type="UniPathway" id="UPA00618">
    <property type="reaction ID" value="UER00672"/>
</dbReference>
<dbReference type="Proteomes" id="UP000009159">
    <property type="component" value="Chromosome"/>
</dbReference>
<dbReference type="GO" id="GO:0005829">
    <property type="term" value="C:cytosol"/>
    <property type="evidence" value="ECO:0007669"/>
    <property type="project" value="TreeGrafter"/>
</dbReference>
<dbReference type="GO" id="GO:0005524">
    <property type="term" value="F:ATP binding"/>
    <property type="evidence" value="ECO:0007669"/>
    <property type="project" value="UniProtKB-UniRule"/>
</dbReference>
<dbReference type="GO" id="GO:0004370">
    <property type="term" value="F:glycerol kinase activity"/>
    <property type="evidence" value="ECO:0000250"/>
    <property type="project" value="UniProtKB"/>
</dbReference>
<dbReference type="GO" id="GO:0019563">
    <property type="term" value="P:glycerol catabolic process"/>
    <property type="evidence" value="ECO:0007669"/>
    <property type="project" value="UniProtKB-UniRule"/>
</dbReference>
<dbReference type="GO" id="GO:0006071">
    <property type="term" value="P:glycerol metabolic process"/>
    <property type="evidence" value="ECO:0000250"/>
    <property type="project" value="UniProtKB"/>
</dbReference>
<dbReference type="GO" id="GO:0006072">
    <property type="term" value="P:glycerol-3-phosphate metabolic process"/>
    <property type="evidence" value="ECO:0007669"/>
    <property type="project" value="InterPro"/>
</dbReference>
<dbReference type="CDD" id="cd07769">
    <property type="entry name" value="ASKHA_NBD_FGGY_GK"/>
    <property type="match status" value="1"/>
</dbReference>
<dbReference type="FunFam" id="3.30.420.40:FF:000007">
    <property type="entry name" value="Glycerol kinase"/>
    <property type="match status" value="1"/>
</dbReference>
<dbReference type="FunFam" id="3.30.420.40:FF:000008">
    <property type="entry name" value="Glycerol kinase"/>
    <property type="match status" value="1"/>
</dbReference>
<dbReference type="Gene3D" id="3.30.420.40">
    <property type="match status" value="2"/>
</dbReference>
<dbReference type="HAMAP" id="MF_00186">
    <property type="entry name" value="Glycerol_kin"/>
    <property type="match status" value="1"/>
</dbReference>
<dbReference type="InterPro" id="IPR043129">
    <property type="entry name" value="ATPase_NBD"/>
</dbReference>
<dbReference type="InterPro" id="IPR000577">
    <property type="entry name" value="Carb_kinase_FGGY"/>
</dbReference>
<dbReference type="InterPro" id="IPR018483">
    <property type="entry name" value="Carb_kinase_FGGY_CS"/>
</dbReference>
<dbReference type="InterPro" id="IPR018485">
    <property type="entry name" value="FGGY_C"/>
</dbReference>
<dbReference type="InterPro" id="IPR018484">
    <property type="entry name" value="FGGY_N"/>
</dbReference>
<dbReference type="InterPro" id="IPR005999">
    <property type="entry name" value="Glycerol_kin"/>
</dbReference>
<dbReference type="NCBIfam" id="TIGR01311">
    <property type="entry name" value="glycerol_kin"/>
    <property type="match status" value="1"/>
</dbReference>
<dbReference type="NCBIfam" id="NF000756">
    <property type="entry name" value="PRK00047.1"/>
    <property type="match status" value="1"/>
</dbReference>
<dbReference type="PANTHER" id="PTHR10196:SF69">
    <property type="entry name" value="GLYCEROL KINASE"/>
    <property type="match status" value="1"/>
</dbReference>
<dbReference type="PANTHER" id="PTHR10196">
    <property type="entry name" value="SUGAR KINASE"/>
    <property type="match status" value="1"/>
</dbReference>
<dbReference type="Pfam" id="PF02782">
    <property type="entry name" value="FGGY_C"/>
    <property type="match status" value="1"/>
</dbReference>
<dbReference type="Pfam" id="PF00370">
    <property type="entry name" value="FGGY_N"/>
    <property type="match status" value="1"/>
</dbReference>
<dbReference type="PIRSF" id="PIRSF000538">
    <property type="entry name" value="GlpK"/>
    <property type="match status" value="1"/>
</dbReference>
<dbReference type="SUPFAM" id="SSF53067">
    <property type="entry name" value="Actin-like ATPase domain"/>
    <property type="match status" value="2"/>
</dbReference>
<dbReference type="PROSITE" id="PS00933">
    <property type="entry name" value="FGGY_KINASES_1"/>
    <property type="match status" value="1"/>
</dbReference>
<dbReference type="PROSITE" id="PS00445">
    <property type="entry name" value="FGGY_KINASES_2"/>
    <property type="match status" value="1"/>
</dbReference>